<comment type="function">
    <text evidence="1">Catalyzes the transfer of an acyl group from acyl-ACP to glycerol-3-phosphate (G3P) to form lysophosphatidic acid (LPA). This enzyme can also utilize acyl-CoA as fatty acyl donor, but not acyl-PO(4).</text>
</comment>
<comment type="catalytic activity">
    <reaction evidence="1">
        <text>sn-glycerol 3-phosphate + an acyl-CoA = a 1-acyl-sn-glycero-3-phosphate + CoA</text>
        <dbReference type="Rhea" id="RHEA:15325"/>
        <dbReference type="ChEBI" id="CHEBI:57287"/>
        <dbReference type="ChEBI" id="CHEBI:57597"/>
        <dbReference type="ChEBI" id="CHEBI:57970"/>
        <dbReference type="ChEBI" id="CHEBI:58342"/>
        <dbReference type="EC" id="2.3.1.15"/>
    </reaction>
</comment>
<comment type="catalytic activity">
    <reaction evidence="1">
        <text>a fatty acyl-[ACP] + sn-glycerol 3-phosphate = a 1-acyl-sn-glycero-3-phosphate + holo-[ACP]</text>
        <dbReference type="Rhea" id="RHEA:42300"/>
        <dbReference type="Rhea" id="RHEA-COMP:9685"/>
        <dbReference type="Rhea" id="RHEA-COMP:14125"/>
        <dbReference type="ChEBI" id="CHEBI:57597"/>
        <dbReference type="ChEBI" id="CHEBI:57970"/>
        <dbReference type="ChEBI" id="CHEBI:64479"/>
        <dbReference type="ChEBI" id="CHEBI:138651"/>
        <dbReference type="EC" id="2.3.1.n5"/>
    </reaction>
</comment>
<comment type="pathway">
    <text evidence="1">Lipid metabolism; phospholipid metabolism.</text>
</comment>
<comment type="subunit">
    <text evidence="1">Probably interacts with PlsX.</text>
</comment>
<comment type="subcellular location">
    <subcellularLocation>
        <location evidence="1">Cell inner membrane</location>
        <topology evidence="1">Multi-pass membrane protein</topology>
    </subcellularLocation>
</comment>
<comment type="similarity">
    <text evidence="1">Belongs to the PlsY family.</text>
</comment>
<name>PLSY_SALCH</name>
<evidence type="ECO:0000255" key="1">
    <source>
        <dbReference type="HAMAP-Rule" id="MF_01043"/>
    </source>
</evidence>
<sequence>MSAIAPGMILFAYLCGSISSAILVCRIAGLPDPRESGSGNPGATNVLRIGGKGAAVAVLIFDILKGMLPVWGAYALGVTPFWLGLIAIAACLGHIWPVFFGFKGGKGVATAFGAIAPIGWDLTGVMAGTWLLTVLLSGYSSLGAIVSALIAPFYVWWFKPQFTFPVSMLSCLILLRHHDNIQRLWRRQETKIWTKLKKKRQKD</sequence>
<organism>
    <name type="scientific">Salmonella choleraesuis (strain SC-B67)</name>
    <dbReference type="NCBI Taxonomy" id="321314"/>
    <lineage>
        <taxon>Bacteria</taxon>
        <taxon>Pseudomonadati</taxon>
        <taxon>Pseudomonadota</taxon>
        <taxon>Gammaproteobacteria</taxon>
        <taxon>Enterobacterales</taxon>
        <taxon>Enterobacteriaceae</taxon>
        <taxon>Salmonella</taxon>
    </lineage>
</organism>
<reference key="1">
    <citation type="journal article" date="2005" name="Nucleic Acids Res.">
        <title>The genome sequence of Salmonella enterica serovar Choleraesuis, a highly invasive and resistant zoonotic pathogen.</title>
        <authorList>
            <person name="Chiu C.-H."/>
            <person name="Tang P."/>
            <person name="Chu C."/>
            <person name="Hu S."/>
            <person name="Bao Q."/>
            <person name="Yu J."/>
            <person name="Chou Y.-Y."/>
            <person name="Wang H.-S."/>
            <person name="Lee Y.-S."/>
        </authorList>
    </citation>
    <scope>NUCLEOTIDE SEQUENCE [LARGE SCALE GENOMIC DNA]</scope>
    <source>
        <strain>SC-B67</strain>
    </source>
</reference>
<proteinExistence type="inferred from homology"/>
<keyword id="KW-0997">Cell inner membrane</keyword>
<keyword id="KW-1003">Cell membrane</keyword>
<keyword id="KW-0444">Lipid biosynthesis</keyword>
<keyword id="KW-0443">Lipid metabolism</keyword>
<keyword id="KW-0472">Membrane</keyword>
<keyword id="KW-0594">Phospholipid biosynthesis</keyword>
<keyword id="KW-1208">Phospholipid metabolism</keyword>
<keyword id="KW-0808">Transferase</keyword>
<keyword id="KW-0812">Transmembrane</keyword>
<keyword id="KW-1133">Transmembrane helix</keyword>
<gene>
    <name evidence="1" type="primary">plsY</name>
    <name type="synonym">ygiH</name>
    <name type="ordered locus">SCH_3154</name>
</gene>
<feature type="chain" id="PRO_0000188439" description="Glycerol-3-phosphate acyltransferase">
    <location>
        <begin position="1"/>
        <end position="203"/>
    </location>
</feature>
<feature type="topological domain" description="Periplasmic" evidence="1">
    <location>
        <begin position="1"/>
        <end position="3"/>
    </location>
</feature>
<feature type="transmembrane region" description="Helical" evidence="1">
    <location>
        <begin position="4"/>
        <end position="24"/>
    </location>
</feature>
<feature type="topological domain" description="Cytoplasmic" evidence="1">
    <location>
        <begin position="25"/>
        <end position="52"/>
    </location>
</feature>
<feature type="transmembrane region" description="Helical" evidence="1">
    <location>
        <begin position="53"/>
        <end position="73"/>
    </location>
</feature>
<feature type="topological domain" description="Periplasmic" evidence="1">
    <location>
        <begin position="74"/>
        <end position="80"/>
    </location>
</feature>
<feature type="transmembrane region" description="Helical" evidence="1">
    <location>
        <begin position="81"/>
        <end position="101"/>
    </location>
</feature>
<feature type="topological domain" description="Cytoplasmic" evidence="1">
    <location>
        <begin position="102"/>
        <end position="111"/>
    </location>
</feature>
<feature type="transmembrane region" description="Helical" evidence="1">
    <location>
        <begin position="112"/>
        <end position="132"/>
    </location>
</feature>
<feature type="topological domain" description="Periplasmic" evidence="1">
    <location>
        <begin position="133"/>
        <end position="137"/>
    </location>
</feature>
<feature type="transmembrane region" description="Helical" evidence="1">
    <location>
        <begin position="138"/>
        <end position="158"/>
    </location>
</feature>
<feature type="topological domain" description="Cytoplasmic" evidence="1">
    <location>
        <begin position="159"/>
        <end position="203"/>
    </location>
</feature>
<accession>Q57JQ2</accession>
<protein>
    <recommendedName>
        <fullName evidence="1">Glycerol-3-phosphate acyltransferase</fullName>
    </recommendedName>
    <alternativeName>
        <fullName evidence="1">G3P acyltransferase</fullName>
        <shortName evidence="1">GPAT</shortName>
        <ecNumber evidence="1">2.3.1.15</ecNumber>
        <ecNumber evidence="1">2.3.1.n5</ecNumber>
    </alternativeName>
    <alternativeName>
        <fullName evidence="1">Lysophosphatidic acid synthase</fullName>
        <shortName evidence="1">LPA synthase</shortName>
    </alternativeName>
</protein>
<dbReference type="EC" id="2.3.1.15" evidence="1"/>
<dbReference type="EC" id="2.3.1.n5" evidence="1"/>
<dbReference type="EMBL" id="AE017220">
    <property type="protein sequence ID" value="AAX67060.1"/>
    <property type="molecule type" value="Genomic_DNA"/>
</dbReference>
<dbReference type="RefSeq" id="WP_001272784.1">
    <property type="nucleotide sequence ID" value="NC_006905.1"/>
</dbReference>
<dbReference type="SMR" id="Q57JQ2"/>
<dbReference type="KEGG" id="sec:SCH_3154"/>
<dbReference type="HOGENOM" id="CLU_081254_0_2_6"/>
<dbReference type="UniPathway" id="UPA00085"/>
<dbReference type="Proteomes" id="UP000000538">
    <property type="component" value="Chromosome"/>
</dbReference>
<dbReference type="GO" id="GO:0005886">
    <property type="term" value="C:plasma membrane"/>
    <property type="evidence" value="ECO:0007669"/>
    <property type="project" value="UniProtKB-SubCell"/>
</dbReference>
<dbReference type="GO" id="GO:0043772">
    <property type="term" value="F:acyl-phosphate glycerol-3-phosphate acyltransferase activity"/>
    <property type="evidence" value="ECO:0007669"/>
    <property type="project" value="InterPro"/>
</dbReference>
<dbReference type="GO" id="GO:0004366">
    <property type="term" value="F:glycerol-3-phosphate O-acyltransferase activity"/>
    <property type="evidence" value="ECO:0007669"/>
    <property type="project" value="UniProtKB-UniRule"/>
</dbReference>
<dbReference type="GO" id="GO:0008654">
    <property type="term" value="P:phospholipid biosynthetic process"/>
    <property type="evidence" value="ECO:0007669"/>
    <property type="project" value="UniProtKB-UniRule"/>
</dbReference>
<dbReference type="HAMAP" id="MF_01043">
    <property type="entry name" value="PlsY"/>
    <property type="match status" value="1"/>
</dbReference>
<dbReference type="InterPro" id="IPR003811">
    <property type="entry name" value="G3P_acylTferase_PlsY"/>
</dbReference>
<dbReference type="NCBIfam" id="TIGR00023">
    <property type="entry name" value="glycerol-3-phosphate 1-O-acyltransferase PlsY"/>
    <property type="match status" value="1"/>
</dbReference>
<dbReference type="PANTHER" id="PTHR30309:SF0">
    <property type="entry name" value="GLYCEROL-3-PHOSPHATE ACYLTRANSFERASE-RELATED"/>
    <property type="match status" value="1"/>
</dbReference>
<dbReference type="PANTHER" id="PTHR30309">
    <property type="entry name" value="INNER MEMBRANE PROTEIN YGIH"/>
    <property type="match status" value="1"/>
</dbReference>
<dbReference type="Pfam" id="PF02660">
    <property type="entry name" value="G3P_acyltransf"/>
    <property type="match status" value="1"/>
</dbReference>
<dbReference type="SMART" id="SM01207">
    <property type="entry name" value="G3P_acyltransf"/>
    <property type="match status" value="1"/>
</dbReference>